<protein>
    <recommendedName>
        <fullName evidence="1">thr operon leader peptide</fullName>
    </recommendedName>
    <alternativeName>
        <fullName evidence="1">thr operon attenuator</fullName>
    </alternativeName>
</protein>
<comment type="function">
    <text evidence="1">This protein is involved in control of the biosynthesis of threonine.</text>
</comment>
<comment type="similarity">
    <text evidence="1">Belongs to the thr operon leader peptide family.</text>
</comment>
<name>LPT_SHIB3</name>
<evidence type="ECO:0000255" key="1">
    <source>
        <dbReference type="HAMAP-Rule" id="MF_01907"/>
    </source>
</evidence>
<keyword id="KW-0028">Amino-acid biosynthesis</keyword>
<keyword id="KW-0428">Leader peptide</keyword>
<keyword id="KW-1185">Reference proteome</keyword>
<keyword id="KW-0791">Threonine biosynthesis</keyword>
<dbReference type="EMBL" id="CP001063">
    <property type="protein sequence ID" value="ACD07923.1"/>
    <property type="molecule type" value="Genomic_DNA"/>
</dbReference>
<dbReference type="RefSeq" id="WP_001386572.1">
    <property type="nucleotide sequence ID" value="NC_010658.1"/>
</dbReference>
<dbReference type="STRING" id="344609.SbBS512_E0001"/>
<dbReference type="GeneID" id="93777441"/>
<dbReference type="KEGG" id="sbc:SbBS512_E0001"/>
<dbReference type="HOGENOM" id="CLU_221491_0_1_6"/>
<dbReference type="Proteomes" id="UP000001030">
    <property type="component" value="Chromosome"/>
</dbReference>
<dbReference type="GO" id="GO:0009088">
    <property type="term" value="P:threonine biosynthetic process"/>
    <property type="evidence" value="ECO:0007669"/>
    <property type="project" value="UniProtKB-UniRule"/>
</dbReference>
<dbReference type="GO" id="GO:0031556">
    <property type="term" value="P:transcriptional attenuation by ribosome"/>
    <property type="evidence" value="ECO:0007669"/>
    <property type="project" value="UniProtKB-UniRule"/>
</dbReference>
<dbReference type="HAMAP" id="MF_01907">
    <property type="entry name" value="Leader_Thr"/>
    <property type="match status" value="1"/>
</dbReference>
<dbReference type="InterPro" id="IPR011720">
    <property type="entry name" value="Thr_lead_pept"/>
</dbReference>
<dbReference type="NCBIfam" id="NF007329">
    <property type="entry name" value="PRK09816.1"/>
    <property type="match status" value="1"/>
</dbReference>
<dbReference type="NCBIfam" id="TIGR02077">
    <property type="entry name" value="thr_lead_pep"/>
    <property type="match status" value="1"/>
</dbReference>
<dbReference type="Pfam" id="PF08254">
    <property type="entry name" value="Leader_Thr"/>
    <property type="match status" value="1"/>
</dbReference>
<feature type="peptide" id="PRO_1000188785" description="thr operon leader peptide">
    <location>
        <begin position="1"/>
        <end position="21"/>
    </location>
</feature>
<sequence>MKRISTTITTTITITTGNGAG</sequence>
<gene>
    <name evidence="1" type="primary">thrL</name>
    <name type="ordered locus">SbBS512_E0001</name>
</gene>
<accession>B2U217</accession>
<reference key="1">
    <citation type="submission" date="2008-05" db="EMBL/GenBank/DDBJ databases">
        <title>Complete sequence of Shigella boydii serotype 18 strain BS512.</title>
        <authorList>
            <person name="Rasko D.A."/>
            <person name="Rosovitz M."/>
            <person name="Maurelli A.T."/>
            <person name="Myers G."/>
            <person name="Seshadri R."/>
            <person name="Cer R."/>
            <person name="Jiang L."/>
            <person name="Ravel J."/>
            <person name="Sebastian Y."/>
        </authorList>
    </citation>
    <scope>NUCLEOTIDE SEQUENCE [LARGE SCALE GENOMIC DNA]</scope>
    <source>
        <strain>CDC 3083-94 / BS512</strain>
    </source>
</reference>
<proteinExistence type="inferred from homology"/>
<organism>
    <name type="scientific">Shigella boydii serotype 18 (strain CDC 3083-94 / BS512)</name>
    <dbReference type="NCBI Taxonomy" id="344609"/>
    <lineage>
        <taxon>Bacteria</taxon>
        <taxon>Pseudomonadati</taxon>
        <taxon>Pseudomonadota</taxon>
        <taxon>Gammaproteobacteria</taxon>
        <taxon>Enterobacterales</taxon>
        <taxon>Enterobacteriaceae</taxon>
        <taxon>Shigella</taxon>
    </lineage>
</organism>